<accession>Q4U0Y4</accession>
<accession>Q4U0Y3</accession>
<accession>Q6NUD1</accession>
<accession>Q9I8H9</accession>
<reference evidence="12" key="1">
    <citation type="journal article" date="2003" name="Mech. Dev.">
        <title>Xenopus nucleosome assembly protein becomes tissue-restricted during development and can alter the expression of specific genes.</title>
        <authorList>
            <person name="Steer W.M."/>
            <person name="Abu-Daya A."/>
            <person name="Brickwood S.J."/>
            <person name="Mumford K.L."/>
            <person name="Jordanaires N."/>
            <person name="Mitchell J."/>
            <person name="Robinson C."/>
            <person name="Thorne A.W."/>
            <person name="Guille M.J."/>
        </authorList>
    </citation>
    <scope>NUCLEOTIDE SEQUENCE [MRNA] (ISOFORM 1)</scope>
    <scope>FUNCTION</scope>
    <scope>SUBCELLULAR LOCATION</scope>
    <scope>TISSUE SPECIFICITY</scope>
    <scope>DEVELOPMENTAL STAGE</scope>
    <scope>PHOSPHORYLATION</scope>
    <source>
        <tissue evidence="4">Gastrula</tissue>
    </source>
</reference>
<reference evidence="12 15" key="2">
    <citation type="journal article" date="2005" name="Proc. Natl. Acad. Sci. U.S.A.">
        <title>Nucleosome assembly protein-1 is a linker histone chaperone in Xenopus eggs.</title>
        <authorList>
            <person name="Shintomi K."/>
            <person name="Iwabuchi M."/>
            <person name="Saeki H."/>
            <person name="Ura K."/>
            <person name="Kishimoto T."/>
            <person name="Ohsumi K."/>
        </authorList>
    </citation>
    <scope>NUCLEOTIDE SEQUENCE [MRNA] (ISOFORMS 1 AND 2)</scope>
    <scope>FUNCTION</scope>
    <scope>INTERACTION WITH B4</scope>
    <source>
        <tissue evidence="6">Egg</tissue>
    </source>
</reference>
<reference evidence="12 14" key="3">
    <citation type="submission" date="2004-04" db="EMBL/GenBank/DDBJ databases">
        <authorList>
            <consortium name="NIH - Xenopus Gene Collection (XGC) project"/>
        </authorList>
    </citation>
    <scope>NUCLEOTIDE SEQUENCE [LARGE SCALE MRNA] (ISOFORM 1)</scope>
    <source>
        <tissue evidence="14">Ovary</tissue>
    </source>
</reference>
<reference evidence="12 14" key="4">
    <citation type="submission" date="2000-06" db="EMBL/GenBank/DDBJ databases">
        <title>Identification of protein phosphatase-1 binding proteins in a Xenopus laevis gastrula stage embryo library.</title>
        <authorList>
            <person name="Oliver C.J."/>
            <person name="Shenolikar S."/>
        </authorList>
    </citation>
    <scope>NUCLEOTIDE SEQUENCE [MRNA] OF 27-392</scope>
    <source>
        <tissue evidence="13">Gastrula</tissue>
    </source>
</reference>
<reference evidence="12" key="5">
    <citation type="journal article" date="2006" name="Nucleic Acids Res.">
        <title>Identification of a structural and functional domain in xNAP1 involved in protein-protein interactions.</title>
        <authorList>
            <person name="Friedeberg C.E."/>
            <person name="Scarlett G."/>
            <person name="McGeehan J."/>
            <person name="Abu-Daya A."/>
            <person name="Guille M.J."/>
            <person name="Kneale G."/>
        </authorList>
    </citation>
    <scope>PROTEIN SEQUENCE OF 38-43 AND 52-29</scope>
    <scope>FUNCTION</scope>
    <scope>MULTIMERIZATION</scope>
    <scope>IDENTIFICATION BY MASS SPECTROMETRY</scope>
</reference>
<reference evidence="12" key="6">
    <citation type="journal article" date="1995" name="J. Cell Biol.">
        <title>Members of the NAP/SET family of proteins interact specifically with B-type cyclins.</title>
        <authorList>
            <person name="Kellogg D.R."/>
            <person name="Kikuchi A."/>
            <person name="Fujii-Nakata T."/>
            <person name="Turck C.W."/>
            <person name="Murray A.W."/>
        </authorList>
    </citation>
    <scope>INTERACTION WITH CCNB1 AND CCNB2</scope>
    <scope>PHOSPHORYLATION</scope>
</reference>
<reference evidence="12" key="7">
    <citation type="journal article" date="2005" name="Blood">
        <title>Zygotic nucleosome assembly protein-like 1 has a specific, non-cell autonomous role in hematopoiesis.</title>
        <authorList>
            <person name="Abu-Daya A."/>
            <person name="Steer W.M."/>
            <person name="Trollope A.F."/>
            <person name="Friedeberg C.E."/>
            <person name="Patient R.K."/>
            <person name="Thorne A.W."/>
            <person name="Guille M.J."/>
        </authorList>
    </citation>
    <scope>FUNCTION</scope>
</reference>
<comment type="function">
    <text evidence="4 5 6 7">Acts as a chaperone for the linker histone to facilitate deposition of histone B4 onto linker DNA (PubMed:14550533, PubMed:15811954, PubMed:15928086, PubMed:16982648). Required for both remodeling of sperm chromatin into nucleosomes, and linker histone binding to nucleosome core dimers. Plays a role in tissue-specific gene regulation. Required for primitive hemopoiesis, acting upstream of tal1/scl (PubMed:14550533, PubMed:15811954, PubMed:15928086, PubMed:16982648).</text>
</comment>
<comment type="subunit">
    <text evidence="6 7 8">Forms homomultimers. Interacts with histone B4. Interacts with the B-type cyclins ccnb1 and ccnb2.</text>
</comment>
<comment type="subcellular location">
    <subcellularLocation>
        <location evidence="4">Cytoplasm</location>
    </subcellularLocation>
    <subcellularLocation>
        <location evidence="4">Nucleus</location>
    </subcellularLocation>
    <text evidence="4">Cytoplasmic prior to the midblastula transition, becoming predominantly nuclear subsequently.</text>
</comment>
<comment type="alternative products">
    <event type="alternative splicing"/>
    <isoform>
        <id>Q4U0Y4-1</id>
        <name evidence="4 6">1</name>
        <name evidence="15">p60A</name>
        <sequence type="displayed"/>
    </isoform>
    <isoform>
        <id>Q4U0Y4-2</id>
        <name evidence="6">2</name>
        <name evidence="16">p56A</name>
        <sequence type="described" ref="VSP_052856"/>
    </isoform>
</comment>
<comment type="tissue specificity">
    <text evidence="4">Initially expressed throughout the embryo with expression higher at the animal pole. Becomes localized to presumptive ectoderm by gastrula stages. By stage 18 (neurula), expressed in the neural plate and posterior to the cement gland. In late neurula/early tailbud stages, expressed in the neural crest, neural tube, eyes, tailbud and ventral blood islands. Adult expression is predominantly in ovaries.</text>
</comment>
<comment type="developmental stage">
    <text evidence="4">Expressed both maternally and zygotically. Expression levels remain constant during embryonic development, increasing at the swimming tadpole stage.</text>
</comment>
<comment type="domain">
    <text evidence="1">The NAP1L motif is required for the histone chaperone activity.</text>
</comment>
<comment type="domain">
    <text evidence="1">The acidic domains are probably involved in the interaction with histones.</text>
</comment>
<comment type="PTM">
    <text evidence="4 8">Phosphorylated by cyclin B-cdc2 kinase complexes.</text>
</comment>
<comment type="similarity">
    <text evidence="2">Belongs to the nucleosome assembly protein (NAP) family.</text>
</comment>
<comment type="sequence caution" evidence="12">
    <conflict type="miscellaneous discrepancy">
        <sequence resource="EMBL-CDS" id="AAF86278"/>
    </conflict>
    <text>C-terminus does not match that of displayed sequence.</text>
</comment>
<comment type="sequence caution" evidence="12">
    <conflict type="frameshift">
        <sequence resource="EMBL-CDS" id="AAH68664"/>
    </conflict>
</comment>
<sequence length="392" mass="45187">MANIDNKGQTELDQQDMEDVEDVEEEETGEDANSKARQLTAQMMQNPQVLAALQERLDDLVGTPTGYIESLPKVVKRRVNALKNLQVKCAQIEAKFYEEVHELERKYAALYQPLFDKRSDIINATYEPTEEECEWKVEEEDISGDLKEKAKLEEEKKDEEKEDPKGIPEFWLTVFKNVDLLSDMLQEHDEPILKHLKDIKVKFSDAGQPMSFTLEFYFEPNEFFTNEVLTKTYKMRSEPDESDPFSFDGPEIMGCTGCLIDWKKGKNVTLKTIKKKQKHKGRGTVRTVTKTVPNDSFFNFFTPPEVPENGELDDDAEAILTADFEIGHFLRERIIPRSVLYFTGEAIEDDDDDYDEEGEEADDEEGEEEADEDNDPDYEPKKGQNPAECKQQ</sequence>
<gene>
    <name type="primary">nap1l1-a</name>
    <name type="synonym">nap1-a</name>
</gene>
<keyword id="KW-0025">Alternative splicing</keyword>
<keyword id="KW-0963">Cytoplasm</keyword>
<keyword id="KW-0217">Developmental protein</keyword>
<keyword id="KW-0221">Differentiation</keyword>
<keyword id="KW-0903">Direct protein sequencing</keyword>
<keyword id="KW-0539">Nucleus</keyword>
<keyword id="KW-0597">Phosphoprotein</keyword>
<keyword id="KW-1185">Reference proteome</keyword>
<keyword id="KW-0744">Spermatogenesis</keyword>
<keyword id="KW-0804">Transcription</keyword>
<keyword id="KW-0805">Transcription regulation</keyword>
<dbReference type="EMBL" id="DQ020268">
    <property type="protein sequence ID" value="AAY43229.1"/>
    <property type="molecule type" value="mRNA"/>
</dbReference>
<dbReference type="EMBL" id="DQ020269">
    <property type="protein sequence ID" value="AAY43230.1"/>
    <property type="molecule type" value="mRNA"/>
</dbReference>
<dbReference type="EMBL" id="BC068664">
    <property type="protein sequence ID" value="AAH68664.1"/>
    <property type="status" value="ALT_FRAME"/>
    <property type="molecule type" value="mRNA"/>
</dbReference>
<dbReference type="EMBL" id="AF278538">
    <property type="protein sequence ID" value="AAF86278.1"/>
    <property type="status" value="ALT_SEQ"/>
    <property type="molecule type" value="mRNA"/>
</dbReference>
<dbReference type="RefSeq" id="NP_001082010.1">
    <property type="nucleotide sequence ID" value="NM_001088541.1"/>
</dbReference>
<dbReference type="SMR" id="Q4U0Y4"/>
<dbReference type="BioGRID" id="99511">
    <property type="interactions" value="1"/>
</dbReference>
<dbReference type="DNASU" id="398176"/>
<dbReference type="GeneID" id="398176"/>
<dbReference type="KEGG" id="xla:398176"/>
<dbReference type="AGR" id="Xenbase:XB-GENE-484201"/>
<dbReference type="CTD" id="398176"/>
<dbReference type="Xenbase" id="XB-GENE-484201">
    <property type="gene designation" value="nap1l1.S"/>
</dbReference>
<dbReference type="OrthoDB" id="27325at2759"/>
<dbReference type="Proteomes" id="UP000186698">
    <property type="component" value="Chromosome 3S"/>
</dbReference>
<dbReference type="Bgee" id="398176">
    <property type="expression patterns" value="Expressed in lung and 19 other cell types or tissues"/>
</dbReference>
<dbReference type="GO" id="GO:0000785">
    <property type="term" value="C:chromatin"/>
    <property type="evidence" value="ECO:0000318"/>
    <property type="project" value="GO_Central"/>
</dbReference>
<dbReference type="GO" id="GO:0005737">
    <property type="term" value="C:cytoplasm"/>
    <property type="evidence" value="ECO:0000314"/>
    <property type="project" value="UniProtKB"/>
</dbReference>
<dbReference type="GO" id="GO:0005634">
    <property type="term" value="C:nucleus"/>
    <property type="evidence" value="ECO:0000314"/>
    <property type="project" value="UniProtKB"/>
</dbReference>
<dbReference type="GO" id="GO:0003682">
    <property type="term" value="F:chromatin binding"/>
    <property type="evidence" value="ECO:0000318"/>
    <property type="project" value="GO_Central"/>
</dbReference>
<dbReference type="GO" id="GO:0030332">
    <property type="term" value="F:cyclin binding"/>
    <property type="evidence" value="ECO:0000353"/>
    <property type="project" value="UniProtKB"/>
</dbReference>
<dbReference type="GO" id="GO:0042393">
    <property type="term" value="F:histone binding"/>
    <property type="evidence" value="ECO:0000353"/>
    <property type="project" value="UniProtKB"/>
</dbReference>
<dbReference type="GO" id="GO:0042802">
    <property type="term" value="F:identical protein binding"/>
    <property type="evidence" value="ECO:0000353"/>
    <property type="project" value="UniProtKB"/>
</dbReference>
<dbReference type="GO" id="GO:0006334">
    <property type="term" value="P:nucleosome assembly"/>
    <property type="evidence" value="ECO:0000315"/>
    <property type="project" value="UniProtKB"/>
</dbReference>
<dbReference type="GO" id="GO:0045944">
    <property type="term" value="P:positive regulation of transcription by RNA polymerase II"/>
    <property type="evidence" value="ECO:0000314"/>
    <property type="project" value="UniProtKB"/>
</dbReference>
<dbReference type="GO" id="GO:0060215">
    <property type="term" value="P:primitive hemopoiesis"/>
    <property type="evidence" value="ECO:0000315"/>
    <property type="project" value="UniProtKB"/>
</dbReference>
<dbReference type="GO" id="GO:0007283">
    <property type="term" value="P:spermatogenesis"/>
    <property type="evidence" value="ECO:0007669"/>
    <property type="project" value="UniProtKB-KW"/>
</dbReference>
<dbReference type="FunFam" id="1.20.5.1500:FF:000001">
    <property type="entry name" value="Nucleosome assembly protein 1-like 1"/>
    <property type="match status" value="1"/>
</dbReference>
<dbReference type="FunFam" id="3.30.1120.90:FF:000001">
    <property type="entry name" value="Nucleosome assembly protein 1-like 1"/>
    <property type="match status" value="1"/>
</dbReference>
<dbReference type="Gene3D" id="1.20.5.1500">
    <property type="match status" value="1"/>
</dbReference>
<dbReference type="Gene3D" id="3.30.1120.90">
    <property type="entry name" value="Nucleosome assembly protein"/>
    <property type="match status" value="1"/>
</dbReference>
<dbReference type="InterPro" id="IPR037231">
    <property type="entry name" value="NAP-like_sf"/>
</dbReference>
<dbReference type="InterPro" id="IPR002164">
    <property type="entry name" value="NAP_family"/>
</dbReference>
<dbReference type="PANTHER" id="PTHR11875">
    <property type="entry name" value="TESTIS-SPECIFIC Y-ENCODED PROTEIN"/>
    <property type="match status" value="1"/>
</dbReference>
<dbReference type="Pfam" id="PF00956">
    <property type="entry name" value="NAP"/>
    <property type="match status" value="1"/>
</dbReference>
<dbReference type="SUPFAM" id="SSF143113">
    <property type="entry name" value="NAP-like"/>
    <property type="match status" value="1"/>
</dbReference>
<evidence type="ECO:0000250" key="1">
    <source>
        <dbReference type="UniProtKB" id="P55209"/>
    </source>
</evidence>
<evidence type="ECO:0000255" key="2"/>
<evidence type="ECO:0000256" key="3">
    <source>
        <dbReference type="SAM" id="MobiDB-lite"/>
    </source>
</evidence>
<evidence type="ECO:0000269" key="4">
    <source>
    </source>
</evidence>
<evidence type="ECO:0000269" key="5">
    <source>
    </source>
</evidence>
<evidence type="ECO:0000269" key="6">
    <source>
    </source>
</evidence>
<evidence type="ECO:0000269" key="7">
    <source>
    </source>
</evidence>
<evidence type="ECO:0000269" key="8">
    <source>
    </source>
</evidence>
<evidence type="ECO:0000303" key="9">
    <source>
    </source>
</evidence>
<evidence type="ECO:0000303" key="10">
    <source>
    </source>
</evidence>
<evidence type="ECO:0000303" key="11">
    <source>
    </source>
</evidence>
<evidence type="ECO:0000305" key="12"/>
<evidence type="ECO:0000312" key="13">
    <source>
        <dbReference type="EMBL" id="AAF86278.1"/>
    </source>
</evidence>
<evidence type="ECO:0000312" key="14">
    <source>
        <dbReference type="EMBL" id="AAH68664.1"/>
    </source>
</evidence>
<evidence type="ECO:0000312" key="15">
    <source>
        <dbReference type="EMBL" id="AAY43229.1"/>
    </source>
</evidence>
<evidence type="ECO:0000312" key="16">
    <source>
        <dbReference type="EMBL" id="AAY43230.1"/>
    </source>
</evidence>
<name>NPL1A_XENLA</name>
<organism>
    <name type="scientific">Xenopus laevis</name>
    <name type="common">African clawed frog</name>
    <dbReference type="NCBI Taxonomy" id="8355"/>
    <lineage>
        <taxon>Eukaryota</taxon>
        <taxon>Metazoa</taxon>
        <taxon>Chordata</taxon>
        <taxon>Craniata</taxon>
        <taxon>Vertebrata</taxon>
        <taxon>Euteleostomi</taxon>
        <taxon>Amphibia</taxon>
        <taxon>Batrachia</taxon>
        <taxon>Anura</taxon>
        <taxon>Pipoidea</taxon>
        <taxon>Pipidae</taxon>
        <taxon>Xenopodinae</taxon>
        <taxon>Xenopus</taxon>
        <taxon>Xenopus</taxon>
    </lineage>
</organism>
<protein>
    <recommendedName>
        <fullName evidence="1 10">Nucleosome assembly protein 1-like 1-A</fullName>
        <shortName>xNAP1L-A</shortName>
    </recommendedName>
    <alternativeName>
        <fullName evidence="13">Nucleosome assembly protein 1</fullName>
        <shortName evidence="13">NAP-1</shortName>
        <shortName evidence="11">NAP1</shortName>
        <shortName evidence="9 10">xNAP-1</shortName>
        <shortName evidence="10">xNAP1</shortName>
    </alternativeName>
</protein>
<proteinExistence type="evidence at protein level"/>
<feature type="chain" id="PRO_0000345634" description="Nucleosome assembly protein 1-like 1-A">
    <location>
        <begin position="1"/>
        <end position="392"/>
    </location>
</feature>
<feature type="region of interest" description="Disordered" evidence="3">
    <location>
        <begin position="1"/>
        <end position="37"/>
    </location>
</feature>
<feature type="region of interest" description="Disordered" evidence="3">
    <location>
        <begin position="346"/>
        <end position="392"/>
    </location>
</feature>
<feature type="short sequence motif" description="NAP1L motif" evidence="1">
    <location>
        <begin position="126"/>
        <end position="150"/>
    </location>
</feature>
<feature type="short sequence motif" description="Nuclear localization signal" evidence="2">
    <location>
        <begin position="273"/>
        <end position="279"/>
    </location>
</feature>
<feature type="compositionally biased region" description="Acidic residues" evidence="3">
    <location>
        <begin position="13"/>
        <end position="30"/>
    </location>
</feature>
<feature type="compositionally biased region" description="Acidic residues" evidence="3">
    <location>
        <begin position="346"/>
        <end position="377"/>
    </location>
</feature>
<feature type="splice variant" id="VSP_052856" description="In isoform 2." evidence="9">
    <original>KGQNPAECKQQ</original>
    <variation>V</variation>
    <location>
        <begin position="382"/>
        <end position="392"/>
    </location>
</feature>
<feature type="sequence conflict" description="In Ref. 1." evidence="12" ref="1">
    <original>N</original>
    <variation>D</variation>
    <location>
        <position position="3"/>
    </location>
</feature>
<feature type="sequence conflict" description="In Ref. 1 and 3; AAH68664." evidence="12" ref="1 3">
    <original>G</original>
    <variation>E</variation>
    <location>
        <position position="8"/>
    </location>
</feature>
<feature type="sequence conflict" description="In Ref. 4; AAF86278." evidence="12" ref="4">
    <original>ETG</original>
    <variation>GTR</variation>
    <location>
        <begin position="27"/>
        <end position="29"/>
    </location>
</feature>
<feature type="sequence conflict" description="In Ref. 3; AAH68664." evidence="12" ref="3">
    <original>R</original>
    <variation>G</variation>
    <location>
        <position position="37"/>
    </location>
</feature>
<feature type="sequence conflict" description="In Ref. 1 and 4; AAF86278." evidence="12" ref="1 4">
    <original>S</original>
    <variation>N</variation>
    <location>
        <position position="182"/>
    </location>
</feature>
<feature type="sequence conflict" description="In Ref. 1 and 4; AAF86278." evidence="12" ref="1 4">
    <original>E</original>
    <variation>Q</variation>
    <location>
        <position position="357"/>
    </location>
</feature>
<feature type="sequence conflict" description="In Ref. 1 and 4; AAF86278." evidence="12" ref="1 4">
    <original>EGEE</original>
    <variation>FESR</variation>
    <location>
        <begin position="365"/>
        <end position="368"/>
    </location>
</feature>